<protein>
    <recommendedName>
        <fullName evidence="8">Solute carrier protein FPSE_08119</fullName>
    </recommendedName>
    <alternativeName>
        <fullName evidence="6">Fusarium detoxification of benzoxazolinone cluster protein FPSE_08119</fullName>
        <shortName evidence="6">FDB cluster protein FPSE_08119</shortName>
    </alternativeName>
</protein>
<organism>
    <name type="scientific">Fusarium pseudograminearum (strain CS3096)</name>
    <name type="common">Wheat and barley crown-rot fungus</name>
    <dbReference type="NCBI Taxonomy" id="1028729"/>
    <lineage>
        <taxon>Eukaryota</taxon>
        <taxon>Fungi</taxon>
        <taxon>Dikarya</taxon>
        <taxon>Ascomycota</taxon>
        <taxon>Pezizomycotina</taxon>
        <taxon>Sordariomycetes</taxon>
        <taxon>Hypocreomycetidae</taxon>
        <taxon>Hypocreales</taxon>
        <taxon>Nectriaceae</taxon>
        <taxon>Fusarium</taxon>
    </lineage>
</organism>
<dbReference type="EMBL" id="AFNW01000283">
    <property type="protein sequence ID" value="EKJ71673.1"/>
    <property type="molecule type" value="Genomic_DNA"/>
</dbReference>
<dbReference type="RefSeq" id="XP_009259512.1">
    <property type="nucleotide sequence ID" value="XM_009261237.1"/>
</dbReference>
<dbReference type="SMR" id="K3VFR5"/>
<dbReference type="EnsemblFungi" id="EKJ71673">
    <property type="protein sequence ID" value="EKJ71673"/>
    <property type="gene ID" value="FPSE_08119"/>
</dbReference>
<dbReference type="GeneID" id="20366737"/>
<dbReference type="KEGG" id="fpu:FPSE_08119"/>
<dbReference type="eggNOG" id="KOG0759">
    <property type="taxonomic scope" value="Eukaryota"/>
</dbReference>
<dbReference type="HOGENOM" id="CLU_015166_14_1_1"/>
<dbReference type="OrthoDB" id="756301at2759"/>
<dbReference type="Proteomes" id="UP000007978">
    <property type="component" value="Chromosome 2"/>
</dbReference>
<dbReference type="GO" id="GO:0005743">
    <property type="term" value="C:mitochondrial inner membrane"/>
    <property type="evidence" value="ECO:0007669"/>
    <property type="project" value="UniProtKB-SubCell"/>
</dbReference>
<dbReference type="GO" id="GO:0055085">
    <property type="term" value="P:transmembrane transport"/>
    <property type="evidence" value="ECO:0007669"/>
    <property type="project" value="InterPro"/>
</dbReference>
<dbReference type="FunFam" id="1.50.40.10:FF:000009">
    <property type="entry name" value="Mitochondrial 2-oxoglutarate/malate carrier protein"/>
    <property type="match status" value="1"/>
</dbReference>
<dbReference type="Gene3D" id="1.50.40.10">
    <property type="entry name" value="Mitochondrial carrier domain"/>
    <property type="match status" value="1"/>
</dbReference>
<dbReference type="InterPro" id="IPR002067">
    <property type="entry name" value="Mit_carrier"/>
</dbReference>
<dbReference type="InterPro" id="IPR050391">
    <property type="entry name" value="Mito_Metabolite_Transporter"/>
</dbReference>
<dbReference type="InterPro" id="IPR018108">
    <property type="entry name" value="Mitochondrial_sb/sol_carrier"/>
</dbReference>
<dbReference type="InterPro" id="IPR023395">
    <property type="entry name" value="Mt_carrier_dom_sf"/>
</dbReference>
<dbReference type="PANTHER" id="PTHR45618">
    <property type="entry name" value="MITOCHONDRIAL DICARBOXYLATE CARRIER-RELATED"/>
    <property type="match status" value="1"/>
</dbReference>
<dbReference type="Pfam" id="PF00153">
    <property type="entry name" value="Mito_carr"/>
    <property type="match status" value="3"/>
</dbReference>
<dbReference type="PRINTS" id="PR00926">
    <property type="entry name" value="MITOCARRIER"/>
</dbReference>
<dbReference type="SUPFAM" id="SSF103506">
    <property type="entry name" value="Mitochondrial carrier"/>
    <property type="match status" value="1"/>
</dbReference>
<dbReference type="PROSITE" id="PS50920">
    <property type="entry name" value="SOLCAR"/>
    <property type="match status" value="3"/>
</dbReference>
<keyword id="KW-0472">Membrane</keyword>
<keyword id="KW-0496">Mitochondrion</keyword>
<keyword id="KW-0999">Mitochondrion inner membrane</keyword>
<keyword id="KW-1185">Reference proteome</keyword>
<keyword id="KW-0677">Repeat</keyword>
<keyword id="KW-0812">Transmembrane</keyword>
<keyword id="KW-1133">Transmembrane helix</keyword>
<keyword id="KW-0813">Transport</keyword>
<evidence type="ECO:0000250" key="1">
    <source>
        <dbReference type="UniProtKB" id="W7MLD5"/>
    </source>
</evidence>
<evidence type="ECO:0000255" key="2"/>
<evidence type="ECO:0000255" key="3">
    <source>
        <dbReference type="PROSITE-ProRule" id="PRU00282"/>
    </source>
</evidence>
<evidence type="ECO:0000269" key="4">
    <source>
    </source>
</evidence>
<evidence type="ECO:0000269" key="5">
    <source>
    </source>
</evidence>
<evidence type="ECO:0000303" key="6">
    <source>
    </source>
</evidence>
<evidence type="ECO:0000305" key="7"/>
<evidence type="ECO:0000305" key="8">
    <source>
    </source>
</evidence>
<name>FDB19_FUSPC</name>
<accession>K3VFR5</accession>
<comment type="function">
    <text evidence="1 4 5">Solute carrier protein; part of the Fusarium detoxification of benzoxazolinone cluster involved in the degradation of benzoxazolinones produced by the host plant (PubMed:25727347, PubMed:26828593). Maize, wheat, and rye produce the 2 benzoxazinone phytoanticipins 2,4-dihy-droxy-7-methoxy-1,4-benzoxazin-3-one (DIMBOA) and 2,4-dihydroxy-1,4-benzoxazin-3-one (DIBOA) that, due to their inherent instability once released, spontaneously degrade to the more stable corresponding benzoxazolinones, 6-methoxy-2-benzoxazolinone (MBOA) and 2-benzoxazolinone (BOA), respectively (By similarity).</text>
</comment>
<comment type="subcellular location">
    <subcellularLocation>
        <location evidence="7">Mitochondrion inner membrane</location>
        <topology evidence="2">Multi-pass membrane protein</topology>
    </subcellularLocation>
</comment>
<comment type="induction">
    <text evidence="4 5">Expression is induced in response to 2-benzoxasolinone (BOA) exposure (PubMed:25727347). Expression is also induced in response to 6-methoxy-2-benzoxazolinone (MBOA) and 2-aminophenol (2-AP) treatment (PubMed:26828593).</text>
</comment>
<comment type="similarity">
    <text evidence="7">Belongs to the mitochondrial carrier (TC 2.A.29) family.</text>
</comment>
<reference key="1">
    <citation type="journal article" date="2012" name="PLoS Pathog.">
        <title>Comparative pathogenomics reveals horizontally acquired novel virulence genes in fungi infecting cereal hosts.</title>
        <authorList>
            <person name="Gardiner D.M."/>
            <person name="McDonald M.C."/>
            <person name="Covarelli L."/>
            <person name="Solomon P.S."/>
            <person name="Rusu A.G."/>
            <person name="Marshall M."/>
            <person name="Kazan K."/>
            <person name="Chakraborty S."/>
            <person name="McDonald B.A."/>
            <person name="Manners J.M."/>
        </authorList>
    </citation>
    <scope>NUCLEOTIDE SEQUENCE [LARGE SCALE GENOMIC DNA]</scope>
    <source>
        <strain>CS3096</strain>
    </source>
</reference>
<reference key="2">
    <citation type="journal article" date="2015" name="Mol. Plant Pathol.">
        <title>Degradation of the benzoxazolinone class of phytoalexins is important for virulence of Fusarium pseudograminearum towards wheat.</title>
        <authorList>
            <person name="Kettle A.J."/>
            <person name="Batley J."/>
            <person name="Benfield A.H."/>
            <person name="Manners J.M."/>
            <person name="Kazan K."/>
            <person name="Gardiner D.M."/>
        </authorList>
    </citation>
    <scope>FUNCTION</scope>
    <scope>INDUCTION</scope>
</reference>
<reference key="3">
    <citation type="journal article" date="2016" name="Fungal Genet. Biol.">
        <title>The Fdb3 transcription factor of the Fusarium Detoxification of Benzoxazolinone gene cluster is required for MBOA but not BOA degradation in Fusarium pseudograminearum.</title>
        <authorList>
            <person name="Kettle A.J."/>
            <person name="Carere J."/>
            <person name="Batley J."/>
            <person name="Manners J.M."/>
            <person name="Kazan K."/>
            <person name="Gardiner D.M."/>
        </authorList>
    </citation>
    <scope>FUNCTION</scope>
    <scope>INDUCTION</scope>
</reference>
<feature type="chain" id="PRO_0000454606" description="Solute carrier protein FPSE_08119">
    <location>
        <begin position="1"/>
        <end position="296"/>
    </location>
</feature>
<feature type="transmembrane region" description="Helical" evidence="2">
    <location>
        <begin position="12"/>
        <end position="32"/>
    </location>
</feature>
<feature type="transmembrane region" description="Helical" evidence="2">
    <location>
        <begin position="122"/>
        <end position="142"/>
    </location>
</feature>
<feature type="transmembrane region" description="Helical" evidence="2">
    <location>
        <begin position="219"/>
        <end position="239"/>
    </location>
</feature>
<feature type="repeat" description="Solcar 1" evidence="3">
    <location>
        <begin position="16"/>
        <end position="102"/>
    </location>
</feature>
<feature type="repeat" description="Solcar 2" evidence="3">
    <location>
        <begin position="114"/>
        <end position="205"/>
    </location>
</feature>
<feature type="repeat" description="Solcar 3" evidence="3">
    <location>
        <begin position="213"/>
        <end position="296"/>
    </location>
</feature>
<sequence length="296" mass="31915">MTDAEVIPLTKGLAALQTALPFIVGCGSGMVATTCVQPIDTIKVRLQLADRSVLRVTTWSIARDLMVEGGILNMYQGLSAAIMRSLVYGTMRLGLFSTFEKELARRARERGTTLSFGERSLAGVGAGALAAVVGNPTEVILIRMQTDGLKPLSQQARYSSAVDALRRIASHEGVLALWKGAGPTLIRAMSINFGQLTSFSEAKNQLQEHTSLSPPVRTAVAAGIAGCLGALISQPFDFVKTRLQNQVKTSPTVGLGSGELLYKGTFDCLFKVIHKEGLFRLYRDILPYFMRIGPHS</sequence>
<proteinExistence type="evidence at transcript level"/>
<gene>
    <name type="ORF">FPSE_08119</name>
</gene>